<dbReference type="EC" id="4.2.1.33" evidence="1"/>
<dbReference type="EMBL" id="CP000248">
    <property type="protein sequence ID" value="ABD25615.1"/>
    <property type="molecule type" value="Genomic_DNA"/>
</dbReference>
<dbReference type="RefSeq" id="WP_011444829.1">
    <property type="nucleotide sequence ID" value="NC_007794.1"/>
</dbReference>
<dbReference type="SMR" id="Q2G958"/>
<dbReference type="STRING" id="279238.Saro_1170"/>
<dbReference type="KEGG" id="nar:Saro_1170"/>
<dbReference type="eggNOG" id="COG0065">
    <property type="taxonomic scope" value="Bacteria"/>
</dbReference>
<dbReference type="HOGENOM" id="CLU_006714_3_4_5"/>
<dbReference type="UniPathway" id="UPA00048">
    <property type="reaction ID" value="UER00071"/>
</dbReference>
<dbReference type="Proteomes" id="UP000009134">
    <property type="component" value="Chromosome"/>
</dbReference>
<dbReference type="GO" id="GO:0003861">
    <property type="term" value="F:3-isopropylmalate dehydratase activity"/>
    <property type="evidence" value="ECO:0007669"/>
    <property type="project" value="UniProtKB-UniRule"/>
</dbReference>
<dbReference type="GO" id="GO:0051539">
    <property type="term" value="F:4 iron, 4 sulfur cluster binding"/>
    <property type="evidence" value="ECO:0007669"/>
    <property type="project" value="UniProtKB-KW"/>
</dbReference>
<dbReference type="GO" id="GO:0046872">
    <property type="term" value="F:metal ion binding"/>
    <property type="evidence" value="ECO:0007669"/>
    <property type="project" value="UniProtKB-KW"/>
</dbReference>
<dbReference type="GO" id="GO:0009098">
    <property type="term" value="P:L-leucine biosynthetic process"/>
    <property type="evidence" value="ECO:0007669"/>
    <property type="project" value="UniProtKB-UniRule"/>
</dbReference>
<dbReference type="CDD" id="cd01583">
    <property type="entry name" value="IPMI"/>
    <property type="match status" value="1"/>
</dbReference>
<dbReference type="FunFam" id="3.30.499.10:FF:000007">
    <property type="entry name" value="3-isopropylmalate dehydratase large subunit"/>
    <property type="match status" value="1"/>
</dbReference>
<dbReference type="Gene3D" id="3.30.499.10">
    <property type="entry name" value="Aconitase, domain 3"/>
    <property type="match status" value="2"/>
</dbReference>
<dbReference type="HAMAP" id="MF_01026">
    <property type="entry name" value="LeuC_type1"/>
    <property type="match status" value="1"/>
</dbReference>
<dbReference type="InterPro" id="IPR004430">
    <property type="entry name" value="3-IsopropMal_deHydase_lsu"/>
</dbReference>
<dbReference type="InterPro" id="IPR015931">
    <property type="entry name" value="Acnase/IPM_dHydase_lsu_aba_1/3"/>
</dbReference>
<dbReference type="InterPro" id="IPR001030">
    <property type="entry name" value="Acoase/IPM_deHydtase_lsu_aba"/>
</dbReference>
<dbReference type="InterPro" id="IPR018136">
    <property type="entry name" value="Aconitase_4Fe-4S_BS"/>
</dbReference>
<dbReference type="InterPro" id="IPR036008">
    <property type="entry name" value="Aconitase_4Fe-4S_dom"/>
</dbReference>
<dbReference type="InterPro" id="IPR050067">
    <property type="entry name" value="IPM_dehydratase_rel_enz"/>
</dbReference>
<dbReference type="InterPro" id="IPR033941">
    <property type="entry name" value="IPMI_cat"/>
</dbReference>
<dbReference type="NCBIfam" id="TIGR00170">
    <property type="entry name" value="leuC"/>
    <property type="match status" value="1"/>
</dbReference>
<dbReference type="NCBIfam" id="NF004016">
    <property type="entry name" value="PRK05478.1"/>
    <property type="match status" value="1"/>
</dbReference>
<dbReference type="NCBIfam" id="NF009116">
    <property type="entry name" value="PRK12466.1"/>
    <property type="match status" value="1"/>
</dbReference>
<dbReference type="PANTHER" id="PTHR43822:SF9">
    <property type="entry name" value="3-ISOPROPYLMALATE DEHYDRATASE"/>
    <property type="match status" value="1"/>
</dbReference>
<dbReference type="PANTHER" id="PTHR43822">
    <property type="entry name" value="HOMOACONITASE, MITOCHONDRIAL-RELATED"/>
    <property type="match status" value="1"/>
</dbReference>
<dbReference type="Pfam" id="PF00330">
    <property type="entry name" value="Aconitase"/>
    <property type="match status" value="1"/>
</dbReference>
<dbReference type="PRINTS" id="PR00415">
    <property type="entry name" value="ACONITASE"/>
</dbReference>
<dbReference type="SUPFAM" id="SSF53732">
    <property type="entry name" value="Aconitase iron-sulfur domain"/>
    <property type="match status" value="1"/>
</dbReference>
<dbReference type="PROSITE" id="PS00450">
    <property type="entry name" value="ACONITASE_1"/>
    <property type="match status" value="1"/>
</dbReference>
<dbReference type="PROSITE" id="PS01244">
    <property type="entry name" value="ACONITASE_2"/>
    <property type="match status" value="1"/>
</dbReference>
<evidence type="ECO:0000255" key="1">
    <source>
        <dbReference type="HAMAP-Rule" id="MF_01026"/>
    </source>
</evidence>
<organism>
    <name type="scientific">Novosphingobium aromaticivorans (strain ATCC 700278 / DSM 12444 / CCUG 56034 / CIP 105152 / NBRC 16084 / F199)</name>
    <dbReference type="NCBI Taxonomy" id="279238"/>
    <lineage>
        <taxon>Bacteria</taxon>
        <taxon>Pseudomonadati</taxon>
        <taxon>Pseudomonadota</taxon>
        <taxon>Alphaproteobacteria</taxon>
        <taxon>Sphingomonadales</taxon>
        <taxon>Sphingomonadaceae</taxon>
        <taxon>Novosphingobium</taxon>
    </lineage>
</organism>
<feature type="chain" id="PRO_0000319824" description="3-isopropylmalate dehydratase large subunit">
    <location>
        <begin position="1"/>
        <end position="478"/>
    </location>
</feature>
<feature type="binding site" evidence="1">
    <location>
        <position position="357"/>
    </location>
    <ligand>
        <name>[4Fe-4S] cluster</name>
        <dbReference type="ChEBI" id="CHEBI:49883"/>
    </ligand>
</feature>
<feature type="binding site" evidence="1">
    <location>
        <position position="418"/>
    </location>
    <ligand>
        <name>[4Fe-4S] cluster</name>
        <dbReference type="ChEBI" id="CHEBI:49883"/>
    </ligand>
</feature>
<feature type="binding site" evidence="1">
    <location>
        <position position="421"/>
    </location>
    <ligand>
        <name>[4Fe-4S] cluster</name>
        <dbReference type="ChEBI" id="CHEBI:49883"/>
    </ligand>
</feature>
<proteinExistence type="inferred from homology"/>
<gene>
    <name evidence="1" type="primary">leuC</name>
    <name type="ordered locus">Saro_1170</name>
</gene>
<keyword id="KW-0004">4Fe-4S</keyword>
<keyword id="KW-0028">Amino-acid biosynthesis</keyword>
<keyword id="KW-0100">Branched-chain amino acid biosynthesis</keyword>
<keyword id="KW-0408">Iron</keyword>
<keyword id="KW-0411">Iron-sulfur</keyword>
<keyword id="KW-0432">Leucine biosynthesis</keyword>
<keyword id="KW-0456">Lyase</keyword>
<keyword id="KW-0479">Metal-binding</keyword>
<keyword id="KW-1185">Reference proteome</keyword>
<name>LEUC_NOVAD</name>
<protein>
    <recommendedName>
        <fullName evidence="1">3-isopropylmalate dehydratase large subunit</fullName>
        <ecNumber evidence="1">4.2.1.33</ecNumber>
    </recommendedName>
    <alternativeName>
        <fullName evidence="1">Alpha-IPM isomerase</fullName>
        <shortName evidence="1">IPMI</shortName>
    </alternativeName>
    <alternativeName>
        <fullName evidence="1">Isopropylmalate isomerase</fullName>
    </alternativeName>
</protein>
<comment type="function">
    <text evidence="1">Catalyzes the isomerization between 2-isopropylmalate and 3-isopropylmalate, via the formation of 2-isopropylmaleate.</text>
</comment>
<comment type="catalytic activity">
    <reaction evidence="1">
        <text>(2R,3S)-3-isopropylmalate = (2S)-2-isopropylmalate</text>
        <dbReference type="Rhea" id="RHEA:32287"/>
        <dbReference type="ChEBI" id="CHEBI:1178"/>
        <dbReference type="ChEBI" id="CHEBI:35121"/>
        <dbReference type="EC" id="4.2.1.33"/>
    </reaction>
</comment>
<comment type="cofactor">
    <cofactor evidence="1">
        <name>[4Fe-4S] cluster</name>
        <dbReference type="ChEBI" id="CHEBI:49883"/>
    </cofactor>
    <text evidence="1">Binds 1 [4Fe-4S] cluster per subunit.</text>
</comment>
<comment type="pathway">
    <text evidence="1">Amino-acid biosynthesis; L-leucine biosynthesis; L-leucine from 3-methyl-2-oxobutanoate: step 2/4.</text>
</comment>
<comment type="subunit">
    <text evidence="1">Heterodimer of LeuC and LeuD.</text>
</comment>
<comment type="similarity">
    <text evidence="1">Belongs to the aconitase/IPM isomerase family. LeuC type 1 subfamily.</text>
</comment>
<sequence>MSSTAPRTLYQKIWDAHVVERRDDGTCLIYIDRHLVHEVTSPQAFEALRAAGRKVRRPDLTLAVPDHNLPTTARRTADGRRVPIADPESAQQLEALERNAPEFGIRYIGDADDEQGIVHVVGPEQGFSLPGATIVCGDSHTACHGGLGALAFGIGTSEVEHVLATQTLLLKQSKTMEVRVEGELTPGVTAKDVVLHITGVLGAAGGTGSVIEYTGSVIRDLSIEGRLTISNMAIEHGARAGLCAPDEKTFAYLKGRPYAPRGEDWDKAVAWWKSLATDPGATYDKVVVIDAKDIAPSVTWGTSPEDVLPISGLVPAPESFADPSKQEAARASLEYMGLVPGQRMEDVEVQNIFIGSCTNSRIEDMRAAAAILKGRKKADNVKWAIVVPGSGLVKKQAEEEGLDRVFIEAGFEWREPGCSACLGMNPDKVPAGERCASTSNRNFVGRQGPGARTHLVSPAMAAAAAVTGRLTDVRKLMA</sequence>
<reference key="1">
    <citation type="submission" date="2006-01" db="EMBL/GenBank/DDBJ databases">
        <title>Complete sequence of Novosphingobium aromaticivorans DSM 12444.</title>
        <authorList>
            <consortium name="US DOE Joint Genome Institute"/>
            <person name="Copeland A."/>
            <person name="Lucas S."/>
            <person name="Lapidus A."/>
            <person name="Barry K."/>
            <person name="Detter J.C."/>
            <person name="Glavina T."/>
            <person name="Hammon N."/>
            <person name="Israni S."/>
            <person name="Pitluck S."/>
            <person name="Chain P."/>
            <person name="Malfatti S."/>
            <person name="Shin M."/>
            <person name="Vergez L."/>
            <person name="Schmutz J."/>
            <person name="Larimer F."/>
            <person name="Land M."/>
            <person name="Kyrpides N."/>
            <person name="Ivanova N."/>
            <person name="Fredrickson J."/>
            <person name="Balkwill D."/>
            <person name="Romine M.F."/>
            <person name="Richardson P."/>
        </authorList>
    </citation>
    <scope>NUCLEOTIDE SEQUENCE [LARGE SCALE GENOMIC DNA]</scope>
    <source>
        <strain>ATCC 700278 / DSM 12444 / CCUG 56034 / CIP 105152 / NBRC 16084 / F199</strain>
    </source>
</reference>
<accession>Q2G958</accession>